<reference key="1">
    <citation type="journal article" date="2000" name="Mol. Phylogenet. Evol.">
        <title>Molecular systematics of pikas (genus Ochotona) inferred from mitochondrial DNA sequences.</title>
        <authorList>
            <person name="Yu N."/>
            <person name="Zheng C."/>
            <person name="Zhang Y.P."/>
            <person name="Li W.H."/>
        </authorList>
    </citation>
    <scope>NUCLEOTIDE SEQUENCE [GENOMIC DNA]</scope>
</reference>
<accession>Q9GBY5</accession>
<organism>
    <name type="scientific">Ochotona forresti</name>
    <name type="common">Forrest's pika</name>
    <dbReference type="NCBI Taxonomy" id="130831"/>
    <lineage>
        <taxon>Eukaryota</taxon>
        <taxon>Metazoa</taxon>
        <taxon>Chordata</taxon>
        <taxon>Craniata</taxon>
        <taxon>Vertebrata</taxon>
        <taxon>Euteleostomi</taxon>
        <taxon>Mammalia</taxon>
        <taxon>Eutheria</taxon>
        <taxon>Euarchontoglires</taxon>
        <taxon>Glires</taxon>
        <taxon>Lagomorpha</taxon>
        <taxon>Ochotonidae</taxon>
        <taxon>Ochotona</taxon>
    </lineage>
</organism>
<sequence length="379" mass="42797">MTNIRKTHPLMKIINHSFIDLPAPSNISAWWNFGSLLGLCLGIQIITGLFLAMHYTSDTLTAFSSVTHICRDVNYGWIIRYMHANGASMFFICLFLHVGRGIYYGSYTYSETWNIGILLLFAVMATAFMGYVLPWGQMSFWGATVITNLLSAIPYIGTDLVQWIWGGFSVDKATLTRFFAFHFILPFIIAALAMVHLLFLHETGSNNPTGIISNADKIPFHPYYTIKDALGFLFLITLLLTLVLFSPDLLGDPDNYTPANPLNTPPHXKPEWYFLFAYAILRSIPNKFGGVLALVLSIAILAVMPLLHTSKQRSMMFRPISQILFWILVADLLTLTWIGGQPVEHPFIIIGQLASFLYFFLILVLMPICSLIENKLLKW</sequence>
<protein>
    <recommendedName>
        <fullName>Cytochrome b</fullName>
    </recommendedName>
    <alternativeName>
        <fullName>Complex III subunit 3</fullName>
    </alternativeName>
    <alternativeName>
        <fullName>Complex III subunit III</fullName>
    </alternativeName>
    <alternativeName>
        <fullName>Cytochrome b-c1 complex subunit 3</fullName>
    </alternativeName>
    <alternativeName>
        <fullName>Ubiquinol-cytochrome-c reductase complex cytochrome b subunit</fullName>
    </alternativeName>
</protein>
<name>CYB_OCHFO</name>
<dbReference type="EMBL" id="AF272998">
    <property type="protein sequence ID" value="AAG00193.1"/>
    <property type="molecule type" value="Genomic_DNA"/>
</dbReference>
<dbReference type="GO" id="GO:0005743">
    <property type="term" value="C:mitochondrial inner membrane"/>
    <property type="evidence" value="ECO:0007669"/>
    <property type="project" value="UniProtKB-SubCell"/>
</dbReference>
<dbReference type="GO" id="GO:0045275">
    <property type="term" value="C:respiratory chain complex III"/>
    <property type="evidence" value="ECO:0007669"/>
    <property type="project" value="InterPro"/>
</dbReference>
<dbReference type="GO" id="GO:0046872">
    <property type="term" value="F:metal ion binding"/>
    <property type="evidence" value="ECO:0007669"/>
    <property type="project" value="UniProtKB-KW"/>
</dbReference>
<dbReference type="GO" id="GO:0008121">
    <property type="term" value="F:ubiquinol-cytochrome-c reductase activity"/>
    <property type="evidence" value="ECO:0007669"/>
    <property type="project" value="InterPro"/>
</dbReference>
<dbReference type="GO" id="GO:0006122">
    <property type="term" value="P:mitochondrial electron transport, ubiquinol to cytochrome c"/>
    <property type="evidence" value="ECO:0007669"/>
    <property type="project" value="TreeGrafter"/>
</dbReference>
<dbReference type="CDD" id="cd00290">
    <property type="entry name" value="cytochrome_b_C"/>
    <property type="match status" value="1"/>
</dbReference>
<dbReference type="CDD" id="cd00284">
    <property type="entry name" value="Cytochrome_b_N"/>
    <property type="match status" value="1"/>
</dbReference>
<dbReference type="FunFam" id="1.20.810.10:FF:000002">
    <property type="entry name" value="Cytochrome b"/>
    <property type="match status" value="1"/>
</dbReference>
<dbReference type="Gene3D" id="1.20.810.10">
    <property type="entry name" value="Cytochrome Bc1 Complex, Chain C"/>
    <property type="match status" value="1"/>
</dbReference>
<dbReference type="InterPro" id="IPR005798">
    <property type="entry name" value="Cyt_b/b6_C"/>
</dbReference>
<dbReference type="InterPro" id="IPR036150">
    <property type="entry name" value="Cyt_b/b6_C_sf"/>
</dbReference>
<dbReference type="InterPro" id="IPR005797">
    <property type="entry name" value="Cyt_b/b6_N"/>
</dbReference>
<dbReference type="InterPro" id="IPR027387">
    <property type="entry name" value="Cytb/b6-like_sf"/>
</dbReference>
<dbReference type="InterPro" id="IPR030689">
    <property type="entry name" value="Cytochrome_b"/>
</dbReference>
<dbReference type="InterPro" id="IPR048260">
    <property type="entry name" value="Cytochrome_b_C_euk/bac"/>
</dbReference>
<dbReference type="InterPro" id="IPR048259">
    <property type="entry name" value="Cytochrome_b_N_euk/bac"/>
</dbReference>
<dbReference type="InterPro" id="IPR016174">
    <property type="entry name" value="Di-haem_cyt_TM"/>
</dbReference>
<dbReference type="PANTHER" id="PTHR19271">
    <property type="entry name" value="CYTOCHROME B"/>
    <property type="match status" value="1"/>
</dbReference>
<dbReference type="PANTHER" id="PTHR19271:SF16">
    <property type="entry name" value="CYTOCHROME B"/>
    <property type="match status" value="1"/>
</dbReference>
<dbReference type="Pfam" id="PF00032">
    <property type="entry name" value="Cytochrom_B_C"/>
    <property type="match status" value="1"/>
</dbReference>
<dbReference type="Pfam" id="PF00033">
    <property type="entry name" value="Cytochrome_B"/>
    <property type="match status" value="1"/>
</dbReference>
<dbReference type="PIRSF" id="PIRSF038885">
    <property type="entry name" value="COB"/>
    <property type="match status" value="1"/>
</dbReference>
<dbReference type="SUPFAM" id="SSF81648">
    <property type="entry name" value="a domain/subunit of cytochrome bc1 complex (Ubiquinol-cytochrome c reductase)"/>
    <property type="match status" value="1"/>
</dbReference>
<dbReference type="SUPFAM" id="SSF81342">
    <property type="entry name" value="Transmembrane di-heme cytochromes"/>
    <property type="match status" value="1"/>
</dbReference>
<dbReference type="PROSITE" id="PS51003">
    <property type="entry name" value="CYTB_CTER"/>
    <property type="match status" value="1"/>
</dbReference>
<dbReference type="PROSITE" id="PS51002">
    <property type="entry name" value="CYTB_NTER"/>
    <property type="match status" value="1"/>
</dbReference>
<comment type="function">
    <text evidence="2">Component of the ubiquinol-cytochrome c reductase complex (complex III or cytochrome b-c1 complex) that is part of the mitochondrial respiratory chain. The b-c1 complex mediates electron transfer from ubiquinol to cytochrome c. Contributes to the generation of a proton gradient across the mitochondrial membrane that is then used for ATP synthesis.</text>
</comment>
<comment type="cofactor">
    <cofactor evidence="2">
        <name>heme b</name>
        <dbReference type="ChEBI" id="CHEBI:60344"/>
    </cofactor>
    <text evidence="2">Binds 2 heme b groups non-covalently.</text>
</comment>
<comment type="subunit">
    <text evidence="2">The cytochrome bc1 complex contains 11 subunits: 3 respiratory subunits (MT-CYB, CYC1 and UQCRFS1), 2 core proteins (UQCRC1 and UQCRC2) and 6 low-molecular weight proteins (UQCRH/QCR6, UQCRB/QCR7, UQCRQ/QCR8, UQCR10/QCR9, UQCR11/QCR10 and a cleavage product of UQCRFS1). This cytochrome bc1 complex then forms a dimer.</text>
</comment>
<comment type="subcellular location">
    <subcellularLocation>
        <location evidence="2">Mitochondrion inner membrane</location>
        <topology evidence="2">Multi-pass membrane protein</topology>
    </subcellularLocation>
</comment>
<comment type="miscellaneous">
    <text evidence="1">Heme 1 (or BL or b562) is low-potential and absorbs at about 562 nm, and heme 2 (or BH or b566) is high-potential and absorbs at about 566 nm.</text>
</comment>
<comment type="similarity">
    <text evidence="3 4">Belongs to the cytochrome b family.</text>
</comment>
<comment type="caution">
    <text evidence="2">The full-length protein contains only eight transmembrane helices, not nine as predicted by bioinformatics tools.</text>
</comment>
<evidence type="ECO:0000250" key="1"/>
<evidence type="ECO:0000250" key="2">
    <source>
        <dbReference type="UniProtKB" id="P00157"/>
    </source>
</evidence>
<evidence type="ECO:0000255" key="3">
    <source>
        <dbReference type="PROSITE-ProRule" id="PRU00967"/>
    </source>
</evidence>
<evidence type="ECO:0000255" key="4">
    <source>
        <dbReference type="PROSITE-ProRule" id="PRU00968"/>
    </source>
</evidence>
<gene>
    <name type="primary">MT-CYB</name>
    <name type="synonym">COB</name>
    <name type="synonym">CYTB</name>
    <name type="synonym">MTCYB</name>
</gene>
<proteinExistence type="inferred from homology"/>
<keyword id="KW-0249">Electron transport</keyword>
<keyword id="KW-0349">Heme</keyword>
<keyword id="KW-0408">Iron</keyword>
<keyword id="KW-0472">Membrane</keyword>
<keyword id="KW-0479">Metal-binding</keyword>
<keyword id="KW-0496">Mitochondrion</keyword>
<keyword id="KW-0999">Mitochondrion inner membrane</keyword>
<keyword id="KW-0679">Respiratory chain</keyword>
<keyword id="KW-0812">Transmembrane</keyword>
<keyword id="KW-1133">Transmembrane helix</keyword>
<keyword id="KW-0813">Transport</keyword>
<keyword id="KW-0830">Ubiquinone</keyword>
<geneLocation type="mitochondrion"/>
<feature type="chain" id="PRO_0000061300" description="Cytochrome b">
    <location>
        <begin position="1"/>
        <end position="379"/>
    </location>
</feature>
<feature type="transmembrane region" description="Helical" evidence="2">
    <location>
        <begin position="33"/>
        <end position="53"/>
    </location>
</feature>
<feature type="transmembrane region" description="Helical" evidence="2">
    <location>
        <begin position="77"/>
        <end position="98"/>
    </location>
</feature>
<feature type="transmembrane region" description="Helical" evidence="2">
    <location>
        <begin position="113"/>
        <end position="133"/>
    </location>
</feature>
<feature type="transmembrane region" description="Helical" evidence="2">
    <location>
        <begin position="178"/>
        <end position="198"/>
    </location>
</feature>
<feature type="transmembrane region" description="Helical" evidence="2">
    <location>
        <begin position="226"/>
        <end position="246"/>
    </location>
</feature>
<feature type="transmembrane region" description="Helical" evidence="2">
    <location>
        <begin position="288"/>
        <end position="308"/>
    </location>
</feature>
<feature type="transmembrane region" description="Helical" evidence="2">
    <location>
        <begin position="320"/>
        <end position="340"/>
    </location>
</feature>
<feature type="transmembrane region" description="Helical" evidence="2">
    <location>
        <begin position="347"/>
        <end position="367"/>
    </location>
</feature>
<feature type="binding site" description="axial binding residue" evidence="2">
    <location>
        <position position="83"/>
    </location>
    <ligand>
        <name>heme b</name>
        <dbReference type="ChEBI" id="CHEBI:60344"/>
        <label>b562</label>
    </ligand>
    <ligandPart>
        <name>Fe</name>
        <dbReference type="ChEBI" id="CHEBI:18248"/>
    </ligandPart>
</feature>
<feature type="binding site" description="axial binding residue" evidence="2">
    <location>
        <position position="97"/>
    </location>
    <ligand>
        <name>heme b</name>
        <dbReference type="ChEBI" id="CHEBI:60344"/>
        <label>b566</label>
    </ligand>
    <ligandPart>
        <name>Fe</name>
        <dbReference type="ChEBI" id="CHEBI:18248"/>
    </ligandPart>
</feature>
<feature type="binding site" description="axial binding residue" evidence="2">
    <location>
        <position position="182"/>
    </location>
    <ligand>
        <name>heme b</name>
        <dbReference type="ChEBI" id="CHEBI:60344"/>
        <label>b562</label>
    </ligand>
    <ligandPart>
        <name>Fe</name>
        <dbReference type="ChEBI" id="CHEBI:18248"/>
    </ligandPart>
</feature>
<feature type="binding site" description="axial binding residue" evidence="2">
    <location>
        <position position="196"/>
    </location>
    <ligand>
        <name>heme b</name>
        <dbReference type="ChEBI" id="CHEBI:60344"/>
        <label>b566</label>
    </ligand>
    <ligandPart>
        <name>Fe</name>
        <dbReference type="ChEBI" id="CHEBI:18248"/>
    </ligandPart>
</feature>
<feature type="binding site" evidence="2">
    <location>
        <position position="201"/>
    </location>
    <ligand>
        <name>a ubiquinone</name>
        <dbReference type="ChEBI" id="CHEBI:16389"/>
    </ligand>
</feature>